<dbReference type="EC" id="2.7.7.6" evidence="1"/>
<dbReference type="EMBL" id="CP001176">
    <property type="protein sequence ID" value="ACK61074.1"/>
    <property type="molecule type" value="Genomic_DNA"/>
</dbReference>
<dbReference type="RefSeq" id="WP_000147553.1">
    <property type="nucleotide sequence ID" value="NZ_VEHB01000017.1"/>
</dbReference>
<dbReference type="SMR" id="B7HJ40"/>
<dbReference type="GeneID" id="72446920"/>
<dbReference type="KEGG" id="bcb:BCB4264_A0123"/>
<dbReference type="HOGENOM" id="CLU_000524_4_1_9"/>
<dbReference type="Proteomes" id="UP000007096">
    <property type="component" value="Chromosome"/>
</dbReference>
<dbReference type="GO" id="GO:0000428">
    <property type="term" value="C:DNA-directed RNA polymerase complex"/>
    <property type="evidence" value="ECO:0007669"/>
    <property type="project" value="UniProtKB-KW"/>
</dbReference>
<dbReference type="GO" id="GO:0003677">
    <property type="term" value="F:DNA binding"/>
    <property type="evidence" value="ECO:0007669"/>
    <property type="project" value="UniProtKB-UniRule"/>
</dbReference>
<dbReference type="GO" id="GO:0003899">
    <property type="term" value="F:DNA-directed RNA polymerase activity"/>
    <property type="evidence" value="ECO:0007669"/>
    <property type="project" value="UniProtKB-UniRule"/>
</dbReference>
<dbReference type="GO" id="GO:0032549">
    <property type="term" value="F:ribonucleoside binding"/>
    <property type="evidence" value="ECO:0007669"/>
    <property type="project" value="InterPro"/>
</dbReference>
<dbReference type="GO" id="GO:0006351">
    <property type="term" value="P:DNA-templated transcription"/>
    <property type="evidence" value="ECO:0007669"/>
    <property type="project" value="UniProtKB-UniRule"/>
</dbReference>
<dbReference type="CDD" id="cd00653">
    <property type="entry name" value="RNA_pol_B_RPB2"/>
    <property type="match status" value="1"/>
</dbReference>
<dbReference type="FunFam" id="3.90.1800.10:FF:000001">
    <property type="entry name" value="DNA-directed RNA polymerase subunit beta"/>
    <property type="match status" value="1"/>
</dbReference>
<dbReference type="Gene3D" id="2.40.50.100">
    <property type="match status" value="1"/>
</dbReference>
<dbReference type="Gene3D" id="2.40.50.150">
    <property type="match status" value="1"/>
</dbReference>
<dbReference type="Gene3D" id="3.90.1100.10">
    <property type="match status" value="2"/>
</dbReference>
<dbReference type="Gene3D" id="2.30.150.10">
    <property type="entry name" value="DNA-directed RNA polymerase, beta subunit, external 1 domain"/>
    <property type="match status" value="1"/>
</dbReference>
<dbReference type="Gene3D" id="2.40.270.10">
    <property type="entry name" value="DNA-directed RNA polymerase, subunit 2, domain 6"/>
    <property type="match status" value="1"/>
</dbReference>
<dbReference type="Gene3D" id="3.90.1800.10">
    <property type="entry name" value="RNA polymerase alpha subunit dimerisation domain"/>
    <property type="match status" value="1"/>
</dbReference>
<dbReference type="Gene3D" id="3.90.1110.10">
    <property type="entry name" value="RNA polymerase Rpb2, domain 2"/>
    <property type="match status" value="1"/>
</dbReference>
<dbReference type="HAMAP" id="MF_01321">
    <property type="entry name" value="RNApol_bact_RpoB"/>
    <property type="match status" value="1"/>
</dbReference>
<dbReference type="InterPro" id="IPR042107">
    <property type="entry name" value="DNA-dir_RNA_pol_bsu_ext_1_sf"/>
</dbReference>
<dbReference type="InterPro" id="IPR019462">
    <property type="entry name" value="DNA-dir_RNA_pol_bsu_external_1"/>
</dbReference>
<dbReference type="InterPro" id="IPR015712">
    <property type="entry name" value="DNA-dir_RNA_pol_su2"/>
</dbReference>
<dbReference type="InterPro" id="IPR007120">
    <property type="entry name" value="DNA-dir_RNAP_su2_dom"/>
</dbReference>
<dbReference type="InterPro" id="IPR037033">
    <property type="entry name" value="DNA-dir_RNAP_su2_hyb_sf"/>
</dbReference>
<dbReference type="InterPro" id="IPR010243">
    <property type="entry name" value="RNA_pol_bsu_bac"/>
</dbReference>
<dbReference type="InterPro" id="IPR007121">
    <property type="entry name" value="RNA_pol_bsu_CS"/>
</dbReference>
<dbReference type="InterPro" id="IPR007644">
    <property type="entry name" value="RNA_pol_bsu_protrusion"/>
</dbReference>
<dbReference type="InterPro" id="IPR007642">
    <property type="entry name" value="RNA_pol_Rpb2_2"/>
</dbReference>
<dbReference type="InterPro" id="IPR037034">
    <property type="entry name" value="RNA_pol_Rpb2_2_sf"/>
</dbReference>
<dbReference type="InterPro" id="IPR007645">
    <property type="entry name" value="RNA_pol_Rpb2_3"/>
</dbReference>
<dbReference type="InterPro" id="IPR007641">
    <property type="entry name" value="RNA_pol_Rpb2_7"/>
</dbReference>
<dbReference type="InterPro" id="IPR014724">
    <property type="entry name" value="RNA_pol_RPB2_OB-fold"/>
</dbReference>
<dbReference type="NCBIfam" id="NF001616">
    <property type="entry name" value="PRK00405.1"/>
    <property type="match status" value="1"/>
</dbReference>
<dbReference type="NCBIfam" id="TIGR02013">
    <property type="entry name" value="rpoB"/>
    <property type="match status" value="1"/>
</dbReference>
<dbReference type="PANTHER" id="PTHR20856">
    <property type="entry name" value="DNA-DIRECTED RNA POLYMERASE I SUBUNIT 2"/>
    <property type="match status" value="1"/>
</dbReference>
<dbReference type="Pfam" id="PF04563">
    <property type="entry name" value="RNA_pol_Rpb2_1"/>
    <property type="match status" value="1"/>
</dbReference>
<dbReference type="Pfam" id="PF04561">
    <property type="entry name" value="RNA_pol_Rpb2_2"/>
    <property type="match status" value="2"/>
</dbReference>
<dbReference type="Pfam" id="PF04565">
    <property type="entry name" value="RNA_pol_Rpb2_3"/>
    <property type="match status" value="1"/>
</dbReference>
<dbReference type="Pfam" id="PF10385">
    <property type="entry name" value="RNA_pol_Rpb2_45"/>
    <property type="match status" value="1"/>
</dbReference>
<dbReference type="Pfam" id="PF00562">
    <property type="entry name" value="RNA_pol_Rpb2_6"/>
    <property type="match status" value="1"/>
</dbReference>
<dbReference type="Pfam" id="PF04560">
    <property type="entry name" value="RNA_pol_Rpb2_7"/>
    <property type="match status" value="1"/>
</dbReference>
<dbReference type="SUPFAM" id="SSF64484">
    <property type="entry name" value="beta and beta-prime subunits of DNA dependent RNA-polymerase"/>
    <property type="match status" value="1"/>
</dbReference>
<dbReference type="PROSITE" id="PS01166">
    <property type="entry name" value="RNA_POL_BETA"/>
    <property type="match status" value="1"/>
</dbReference>
<sequence>MTGQLVQYGRHRQRRSYARISEVLELPNLIEIQTSSYQWFLDEGLREMFQDISPIEDFTGNLSLEFIDYSLGEPKYSVDECKERDVTYAAPLRVKVRLINKETGEVKEQDVFMGDFPLMTETGTFVINGAERVIVSQLVRSPSVYYSGKVDKNGKRGFTATVIPNRGAWLEYETDAKDVVYVRIDRTRKLPVTVLLRALGFGSDQEITELLGDNEYLSNTLEKDNTDSTEKALLEIYERLRPGEPPTVENAKSLLVSRFFDPKRYDLANVGRYKINKKLHIKNRLFNQRLAETLVDPETGEILAAEGTILDRRTLDRILPYLEKNIGFKTAKPMGGVVEGDVELQSIKIYAPESEGERVINVIGNANITRDVKHITPGDILASISYFFNLLYKVGDTDDIDHLGNRRLRSVGELLQNQFRIGLSRMERVVRERMSIQDTNAITPQALINIRPVIASIKEFFGSSQLSQFMDQTNPLAELTHKRRLSALGPGGLTRERAGFEVRDVHYSHYGRMCPIETPEGPNIGLINSLSSFAKVNEFGFIETPYRRVDPETGLVTGHVDYLTADEEDNYVVAQANMKLSDEGEFLSEDIVARFRGENIVTNRERIDYMDVSPKQVVSAATACIPFLENDDSNRALMGANMQRQAVPLMNPESPIVGTGMEYVSAKDSGAAVICKHPGVVERVEAREVWVRRYVEVDGQTVKGDLDRYKMQKFIRSNQGTCYNQRPIVSVGNEVVKGEILADGPSMELGELALGRNVLVGFMTWDGYNYEDAIIMSERLVKDDVYTSIHIEEYESEARDTKLGPEEITRDIPNVGEDALRNLDERGIIRVGAEVKDGDLLVGKVTPKGVTELTAEERLLHAIFGEKAREVRDTSLRVPHGGGGIILDVKVFNREDGDELPPGVNQLVRAYIVQKRKISEGDKMAGRHGNKGVISRILPEEDMPYLPDGTPIDIMLNPLGVPSRMNIGQVLELHLGMAARYLGIHIATPVFDGAREEDVWGTIEEAGMANDAKTILYDGRTGEPFDNRVSVGVMYMIKLAHMVDDKLHARSTGPYSLVTQQPLGGKAQFGGQRFGEMEVWALEAYGAAYTLQEILTVKSDDVVGRVKTYEAIVKGENVPEPGVPESFKVLIKELQSLGMDVKMMSSDDTEIEMRDTEDDDDHQSADKLNVEVETTKE</sequence>
<organism>
    <name type="scientific">Bacillus cereus (strain B4264)</name>
    <dbReference type="NCBI Taxonomy" id="405532"/>
    <lineage>
        <taxon>Bacteria</taxon>
        <taxon>Bacillati</taxon>
        <taxon>Bacillota</taxon>
        <taxon>Bacilli</taxon>
        <taxon>Bacillales</taxon>
        <taxon>Bacillaceae</taxon>
        <taxon>Bacillus</taxon>
        <taxon>Bacillus cereus group</taxon>
    </lineage>
</organism>
<evidence type="ECO:0000255" key="1">
    <source>
        <dbReference type="HAMAP-Rule" id="MF_01321"/>
    </source>
</evidence>
<evidence type="ECO:0000256" key="2">
    <source>
        <dbReference type="SAM" id="MobiDB-lite"/>
    </source>
</evidence>
<name>RPOB_BACC4</name>
<gene>
    <name evidence="1" type="primary">rpoB</name>
    <name type="ordered locus">BCB4264_A0123</name>
</gene>
<reference key="1">
    <citation type="submission" date="2008-10" db="EMBL/GenBank/DDBJ databases">
        <title>Genome sequence of Bacillus cereus B4264.</title>
        <authorList>
            <person name="Dodson R.J."/>
            <person name="Durkin A.S."/>
            <person name="Rosovitz M.J."/>
            <person name="Rasko D.A."/>
            <person name="Hoffmaster A."/>
            <person name="Ravel J."/>
            <person name="Sutton G."/>
        </authorList>
    </citation>
    <scope>NUCLEOTIDE SEQUENCE [LARGE SCALE GENOMIC DNA]</scope>
    <source>
        <strain>B4264</strain>
    </source>
</reference>
<keyword id="KW-0240">DNA-directed RNA polymerase</keyword>
<keyword id="KW-0548">Nucleotidyltransferase</keyword>
<keyword id="KW-0804">Transcription</keyword>
<keyword id="KW-0808">Transferase</keyword>
<comment type="function">
    <text evidence="1">DNA-dependent RNA polymerase catalyzes the transcription of DNA into RNA using the four ribonucleoside triphosphates as substrates.</text>
</comment>
<comment type="catalytic activity">
    <reaction evidence="1">
        <text>RNA(n) + a ribonucleoside 5'-triphosphate = RNA(n+1) + diphosphate</text>
        <dbReference type="Rhea" id="RHEA:21248"/>
        <dbReference type="Rhea" id="RHEA-COMP:14527"/>
        <dbReference type="Rhea" id="RHEA-COMP:17342"/>
        <dbReference type="ChEBI" id="CHEBI:33019"/>
        <dbReference type="ChEBI" id="CHEBI:61557"/>
        <dbReference type="ChEBI" id="CHEBI:140395"/>
        <dbReference type="EC" id="2.7.7.6"/>
    </reaction>
</comment>
<comment type="subunit">
    <text evidence="1">The RNAP catalytic core consists of 2 alpha, 1 beta, 1 beta' and 1 omega subunit. When a sigma factor is associated with the core the holoenzyme is formed, which can initiate transcription.</text>
</comment>
<comment type="similarity">
    <text evidence="1">Belongs to the RNA polymerase beta chain family.</text>
</comment>
<feature type="chain" id="PRO_1000141658" description="DNA-directed RNA polymerase subunit beta">
    <location>
        <begin position="1"/>
        <end position="1177"/>
    </location>
</feature>
<feature type="region of interest" description="Disordered" evidence="2">
    <location>
        <begin position="1147"/>
        <end position="1177"/>
    </location>
</feature>
<feature type="compositionally biased region" description="Acidic residues" evidence="2">
    <location>
        <begin position="1147"/>
        <end position="1161"/>
    </location>
</feature>
<feature type="compositionally biased region" description="Basic and acidic residues" evidence="2">
    <location>
        <begin position="1162"/>
        <end position="1177"/>
    </location>
</feature>
<proteinExistence type="inferred from homology"/>
<accession>B7HJ40</accession>
<protein>
    <recommendedName>
        <fullName evidence="1">DNA-directed RNA polymerase subunit beta</fullName>
        <shortName evidence="1">RNAP subunit beta</shortName>
        <ecNumber evidence="1">2.7.7.6</ecNumber>
    </recommendedName>
    <alternativeName>
        <fullName evidence="1">RNA polymerase subunit beta</fullName>
    </alternativeName>
    <alternativeName>
        <fullName evidence="1">Transcriptase subunit beta</fullName>
    </alternativeName>
</protein>